<organism>
    <name type="scientific">Yersinia pestis bv. Antiqua (strain Angola)</name>
    <dbReference type="NCBI Taxonomy" id="349746"/>
    <lineage>
        <taxon>Bacteria</taxon>
        <taxon>Pseudomonadati</taxon>
        <taxon>Pseudomonadota</taxon>
        <taxon>Gammaproteobacteria</taxon>
        <taxon>Enterobacterales</taxon>
        <taxon>Yersiniaceae</taxon>
        <taxon>Yersinia</taxon>
    </lineage>
</organism>
<protein>
    <recommendedName>
        <fullName evidence="1">Putative double-stranded DNA mimic protein YpAngola_A2157</fullName>
    </recommendedName>
</protein>
<feature type="chain" id="PRO_1000131714" description="Putative double-stranded DNA mimic protein YpAngola_A2157">
    <location>
        <begin position="1"/>
        <end position="107"/>
    </location>
</feature>
<gene>
    <name type="ordered locus">YpAngola_A2157</name>
</gene>
<proteinExistence type="inferred from homology"/>
<comment type="function">
    <text evidence="1">May act as a double-stranded DNA (dsDNA) mimic. Probably regulates the activity of a dsDNA-binding protein.</text>
</comment>
<comment type="similarity">
    <text evidence="1">Belongs to the putative dsDNA mimic protein family.</text>
</comment>
<accession>A9R8K9</accession>
<evidence type="ECO:0000255" key="1">
    <source>
        <dbReference type="HAMAP-Rule" id="MF_00680"/>
    </source>
</evidence>
<sequence length="107" mass="12413">MDLNNRLTEDETLEQAYDIFLELAGDNLDPADILLFNLQFEERGGAELFDPAEDWQEHVDFDINPDFFAEVVIGLADSDGEEINDIFARVLLCREKDHKLCHILWKE</sequence>
<dbReference type="EMBL" id="CP000901">
    <property type="protein sequence ID" value="ABX87976.1"/>
    <property type="molecule type" value="Genomic_DNA"/>
</dbReference>
<dbReference type="RefSeq" id="WP_002210649.1">
    <property type="nucleotide sequence ID" value="NZ_CP009935.1"/>
</dbReference>
<dbReference type="SMR" id="A9R8K9"/>
<dbReference type="KEGG" id="ypg:YpAngola_A2157"/>
<dbReference type="PATRIC" id="fig|349746.12.peg.3149"/>
<dbReference type="Gene3D" id="3.10.450.140">
    <property type="entry name" value="dsDNA mimic, putative"/>
    <property type="match status" value="1"/>
</dbReference>
<dbReference type="HAMAP" id="MF_00680">
    <property type="entry name" value="Put_dsDNA_mimic"/>
    <property type="match status" value="1"/>
</dbReference>
<dbReference type="InterPro" id="IPR007376">
    <property type="entry name" value="dsDNA_mimic_put"/>
</dbReference>
<dbReference type="InterPro" id="IPR036763">
    <property type="entry name" value="Put_dsDNA_mimic_sf"/>
</dbReference>
<dbReference type="NCBIfam" id="NF003469">
    <property type="entry name" value="PRK05094.1"/>
    <property type="match status" value="1"/>
</dbReference>
<dbReference type="Pfam" id="PF04269">
    <property type="entry name" value="DUF440"/>
    <property type="match status" value="1"/>
</dbReference>
<dbReference type="PIRSF" id="PIRSF004916">
    <property type="entry name" value="UCP004916"/>
    <property type="match status" value="1"/>
</dbReference>
<dbReference type="SUPFAM" id="SSF102816">
    <property type="entry name" value="Putative dsDNA mimic"/>
    <property type="match status" value="1"/>
</dbReference>
<name>Y2157_YERPG</name>
<reference key="1">
    <citation type="journal article" date="2010" name="J. Bacteriol.">
        <title>Genome sequence of the deep-rooted Yersinia pestis strain Angola reveals new insights into the evolution and pangenome of the plague bacterium.</title>
        <authorList>
            <person name="Eppinger M."/>
            <person name="Worsham P.L."/>
            <person name="Nikolich M.P."/>
            <person name="Riley D.R."/>
            <person name="Sebastian Y."/>
            <person name="Mou S."/>
            <person name="Achtman M."/>
            <person name="Lindler L.E."/>
            <person name="Ravel J."/>
        </authorList>
    </citation>
    <scope>NUCLEOTIDE SEQUENCE [LARGE SCALE GENOMIC DNA]</scope>
    <source>
        <strain>Angola</strain>
    </source>
</reference>